<protein>
    <recommendedName>
        <fullName evidence="1">Bis(5'-nucleosyl)-tetraphosphatase, symmetrical</fullName>
        <ecNumber evidence="1">3.6.1.41</ecNumber>
    </recommendedName>
    <alternativeName>
        <fullName evidence="1">Ap4A hydrolase</fullName>
    </alternativeName>
    <alternativeName>
        <fullName evidence="1">Diadenosine 5',5'''-P1,P4-tetraphosphate pyrophosphohydrolase</fullName>
    </alternativeName>
    <alternativeName>
        <fullName evidence="1">Diadenosine tetraphosphatase</fullName>
    </alternativeName>
</protein>
<evidence type="ECO:0000255" key="1">
    <source>
        <dbReference type="HAMAP-Rule" id="MF_00199"/>
    </source>
</evidence>
<keyword id="KW-0378">Hydrolase</keyword>
<gene>
    <name evidence="1" type="primary">apaH</name>
    <name type="ordered locus">VCM66_0426</name>
</gene>
<feature type="chain" id="PRO_1000124457" description="Bis(5'-nucleosyl)-tetraphosphatase, symmetrical">
    <location>
        <begin position="1"/>
        <end position="269"/>
    </location>
</feature>
<reference key="1">
    <citation type="journal article" date="2008" name="PLoS ONE">
        <title>A recalibrated molecular clock and independent origins for the cholera pandemic clones.</title>
        <authorList>
            <person name="Feng L."/>
            <person name="Reeves P.R."/>
            <person name="Lan R."/>
            <person name="Ren Y."/>
            <person name="Gao C."/>
            <person name="Zhou Z."/>
            <person name="Ren Y."/>
            <person name="Cheng J."/>
            <person name="Wang W."/>
            <person name="Wang J."/>
            <person name="Qian W."/>
            <person name="Li D."/>
            <person name="Wang L."/>
        </authorList>
    </citation>
    <scope>NUCLEOTIDE SEQUENCE [LARGE SCALE GENOMIC DNA]</scope>
    <source>
        <strain>M66-2</strain>
    </source>
</reference>
<comment type="function">
    <text evidence="1">Hydrolyzes diadenosine 5',5'''-P1,P4-tetraphosphate to yield ADP.</text>
</comment>
<comment type="catalytic activity">
    <reaction evidence="1">
        <text>P(1),P(4)-bis(5'-adenosyl) tetraphosphate + H2O = 2 ADP + 2 H(+)</text>
        <dbReference type="Rhea" id="RHEA:24252"/>
        <dbReference type="ChEBI" id="CHEBI:15377"/>
        <dbReference type="ChEBI" id="CHEBI:15378"/>
        <dbReference type="ChEBI" id="CHEBI:58141"/>
        <dbReference type="ChEBI" id="CHEBI:456216"/>
        <dbReference type="EC" id="3.6.1.41"/>
    </reaction>
</comment>
<comment type="similarity">
    <text evidence="1">Belongs to the Ap4A hydrolase family.</text>
</comment>
<name>APAH_VIBCM</name>
<proteinExistence type="inferred from homology"/>
<dbReference type="EC" id="3.6.1.41" evidence="1"/>
<dbReference type="EMBL" id="CP001233">
    <property type="protein sequence ID" value="ACP04752.1"/>
    <property type="molecule type" value="Genomic_DNA"/>
</dbReference>
<dbReference type="RefSeq" id="WP_000035032.1">
    <property type="nucleotide sequence ID" value="NC_012578.1"/>
</dbReference>
<dbReference type="SMR" id="C3LRH2"/>
<dbReference type="KEGG" id="vcm:VCM66_0426"/>
<dbReference type="HOGENOM" id="CLU_056184_2_0_6"/>
<dbReference type="Proteomes" id="UP000001217">
    <property type="component" value="Chromosome I"/>
</dbReference>
<dbReference type="GO" id="GO:0008803">
    <property type="term" value="F:bis(5'-nucleosyl)-tetraphosphatase (symmetrical) activity"/>
    <property type="evidence" value="ECO:0007669"/>
    <property type="project" value="UniProtKB-UniRule"/>
</dbReference>
<dbReference type="CDD" id="cd07422">
    <property type="entry name" value="MPP_ApaH"/>
    <property type="match status" value="1"/>
</dbReference>
<dbReference type="FunFam" id="3.60.21.10:FF:000013">
    <property type="entry name" value="Bis(5'-nucleosyl)-tetraphosphatase, symmetrical"/>
    <property type="match status" value="1"/>
</dbReference>
<dbReference type="Gene3D" id="3.60.21.10">
    <property type="match status" value="1"/>
</dbReference>
<dbReference type="HAMAP" id="MF_00199">
    <property type="entry name" value="ApaH"/>
    <property type="match status" value="1"/>
</dbReference>
<dbReference type="InterPro" id="IPR004617">
    <property type="entry name" value="ApaH"/>
</dbReference>
<dbReference type="InterPro" id="IPR004843">
    <property type="entry name" value="Calcineurin-like_PHP_ApaH"/>
</dbReference>
<dbReference type="InterPro" id="IPR029052">
    <property type="entry name" value="Metallo-depent_PP-like"/>
</dbReference>
<dbReference type="NCBIfam" id="TIGR00668">
    <property type="entry name" value="apaH"/>
    <property type="match status" value="1"/>
</dbReference>
<dbReference type="NCBIfam" id="NF001204">
    <property type="entry name" value="PRK00166.1"/>
    <property type="match status" value="1"/>
</dbReference>
<dbReference type="PANTHER" id="PTHR40942">
    <property type="match status" value="1"/>
</dbReference>
<dbReference type="PANTHER" id="PTHR40942:SF4">
    <property type="entry name" value="CYTOCHROME C5"/>
    <property type="match status" value="1"/>
</dbReference>
<dbReference type="Pfam" id="PF00149">
    <property type="entry name" value="Metallophos"/>
    <property type="match status" value="1"/>
</dbReference>
<dbReference type="PIRSF" id="PIRSF000903">
    <property type="entry name" value="B5n-ttraPtase_sm"/>
    <property type="match status" value="1"/>
</dbReference>
<dbReference type="SUPFAM" id="SSF56300">
    <property type="entry name" value="Metallo-dependent phosphatases"/>
    <property type="match status" value="1"/>
</dbReference>
<sequence>MANYIVGDIQGCFDELQQLLKQAEFNSQLDTLWFAGDLVARGPKSLETLRFVYQLGDAARVVLGNHDLHLLSVALGHHSAKRRDQTQAVLDAPDAAPLLDWLRQQPLLAEHQEFVLCHAGISPQWDLATARQAAQEVESVLRSPEWSTLIEQMYSDQPDAWHPTLQGIDRLRYIVNAFTRMRFCFPDGRLDMQCKLPPKEVTDGSLLPWFQLPQRIALEKTVIFGHWAALEGYVSETVIGLDTGCVWGGTLTMLRWEDKHYFSQAALPA</sequence>
<accession>C3LRH2</accession>
<organism>
    <name type="scientific">Vibrio cholerae serotype O1 (strain M66-2)</name>
    <dbReference type="NCBI Taxonomy" id="579112"/>
    <lineage>
        <taxon>Bacteria</taxon>
        <taxon>Pseudomonadati</taxon>
        <taxon>Pseudomonadota</taxon>
        <taxon>Gammaproteobacteria</taxon>
        <taxon>Vibrionales</taxon>
        <taxon>Vibrionaceae</taxon>
        <taxon>Vibrio</taxon>
    </lineage>
</organism>